<feature type="chain" id="PRO_0000189193" description="4-diphosphocytidyl-2-C-methyl-D-erythritol kinase">
    <location>
        <begin position="1"/>
        <end position="299"/>
    </location>
</feature>
<feature type="active site" evidence="1">
    <location>
        <position position="11"/>
    </location>
</feature>
<feature type="active site" evidence="1">
    <location>
        <position position="136"/>
    </location>
</feature>
<feature type="binding site" evidence="1">
    <location>
        <begin position="94"/>
        <end position="104"/>
    </location>
    <ligand>
        <name>ATP</name>
        <dbReference type="ChEBI" id="CHEBI:30616"/>
    </ligand>
</feature>
<sequence length="299" mass="31887">MTLYDVPAPAKLNLFLHVVGRRADGYHLLQTAFRFIDLADTLHFEARADGAIGRAYELPGVAESDDLVMRAARSLQRATGTRQGAQIGLHKRIPQGGGLGGGSSDAATTLIALNRLWGTGLSRSQLMQLALPLGADVPVFVFGQSAFAQGVGEDLTAVALSPAAYLVVQPDAGVPTAVIFSDPDLTRDCASVTIADFLALPTSCFGRNDLEPVVLRRYPEVSGAVRWLFEHGLRVRMSGSGACLFAEFPTLPEAVLAQEEITATMRVAGKTTSHTHPGFRLVQASTGLTEHPLRNWIAS</sequence>
<comment type="function">
    <text evidence="1">Catalyzes the phosphorylation of the position 2 hydroxy group of 4-diphosphocytidyl-2C-methyl-D-erythritol.</text>
</comment>
<comment type="catalytic activity">
    <reaction evidence="1">
        <text>4-CDP-2-C-methyl-D-erythritol + ATP = 4-CDP-2-C-methyl-D-erythritol 2-phosphate + ADP + H(+)</text>
        <dbReference type="Rhea" id="RHEA:18437"/>
        <dbReference type="ChEBI" id="CHEBI:15378"/>
        <dbReference type="ChEBI" id="CHEBI:30616"/>
        <dbReference type="ChEBI" id="CHEBI:57823"/>
        <dbReference type="ChEBI" id="CHEBI:57919"/>
        <dbReference type="ChEBI" id="CHEBI:456216"/>
        <dbReference type="EC" id="2.7.1.148"/>
    </reaction>
</comment>
<comment type="pathway">
    <text evidence="1">Isoprenoid biosynthesis; isopentenyl diphosphate biosynthesis via DXP pathway; isopentenyl diphosphate from 1-deoxy-D-xylulose 5-phosphate: step 3/6.</text>
</comment>
<comment type="similarity">
    <text evidence="1">Belongs to the GHMP kinase family. IspE subfamily.</text>
</comment>
<organism>
    <name type="scientific">Bordetella pertussis (strain Tohama I / ATCC BAA-589 / NCTC 13251)</name>
    <dbReference type="NCBI Taxonomy" id="257313"/>
    <lineage>
        <taxon>Bacteria</taxon>
        <taxon>Pseudomonadati</taxon>
        <taxon>Pseudomonadota</taxon>
        <taxon>Betaproteobacteria</taxon>
        <taxon>Burkholderiales</taxon>
        <taxon>Alcaligenaceae</taxon>
        <taxon>Bordetella</taxon>
    </lineage>
</organism>
<gene>
    <name evidence="1" type="primary">ispE</name>
    <name type="synonym">ipk</name>
    <name type="ordered locus">BP3126</name>
</gene>
<protein>
    <recommendedName>
        <fullName evidence="1">4-diphosphocytidyl-2-C-methyl-D-erythritol kinase</fullName>
        <shortName evidence="1">CMK</shortName>
        <ecNumber evidence="1">2.7.1.148</ecNumber>
    </recommendedName>
    <alternativeName>
        <fullName evidence="1">4-(cytidine-5'-diphospho)-2-C-methyl-D-erythritol kinase</fullName>
    </alternativeName>
</protein>
<name>ISPE_BORPE</name>
<proteinExistence type="inferred from homology"/>
<dbReference type="EC" id="2.7.1.148" evidence="1"/>
<dbReference type="EMBL" id="BX640420">
    <property type="protein sequence ID" value="CAE43393.1"/>
    <property type="molecule type" value="Genomic_DNA"/>
</dbReference>
<dbReference type="RefSeq" id="NP_881691.1">
    <property type="nucleotide sequence ID" value="NC_002929.2"/>
</dbReference>
<dbReference type="RefSeq" id="WP_010931311.1">
    <property type="nucleotide sequence ID" value="NZ_CP039022.1"/>
</dbReference>
<dbReference type="SMR" id="Q7VUH0"/>
<dbReference type="STRING" id="257313.BP3126"/>
<dbReference type="PaxDb" id="257313-BP3126"/>
<dbReference type="GeneID" id="69603054"/>
<dbReference type="KEGG" id="bpe:BP3126"/>
<dbReference type="PATRIC" id="fig|257313.5.peg.3377"/>
<dbReference type="eggNOG" id="COG1947">
    <property type="taxonomic scope" value="Bacteria"/>
</dbReference>
<dbReference type="HOGENOM" id="CLU_053057_3_0_4"/>
<dbReference type="UniPathway" id="UPA00056">
    <property type="reaction ID" value="UER00094"/>
</dbReference>
<dbReference type="Proteomes" id="UP000002676">
    <property type="component" value="Chromosome"/>
</dbReference>
<dbReference type="GO" id="GO:0050515">
    <property type="term" value="F:4-(cytidine 5'-diphospho)-2-C-methyl-D-erythritol kinase activity"/>
    <property type="evidence" value="ECO:0007669"/>
    <property type="project" value="UniProtKB-UniRule"/>
</dbReference>
<dbReference type="GO" id="GO:0005524">
    <property type="term" value="F:ATP binding"/>
    <property type="evidence" value="ECO:0007669"/>
    <property type="project" value="UniProtKB-UniRule"/>
</dbReference>
<dbReference type="GO" id="GO:0019288">
    <property type="term" value="P:isopentenyl diphosphate biosynthetic process, methylerythritol 4-phosphate pathway"/>
    <property type="evidence" value="ECO:0007669"/>
    <property type="project" value="UniProtKB-UniRule"/>
</dbReference>
<dbReference type="GO" id="GO:0016114">
    <property type="term" value="P:terpenoid biosynthetic process"/>
    <property type="evidence" value="ECO:0007669"/>
    <property type="project" value="InterPro"/>
</dbReference>
<dbReference type="Gene3D" id="3.30.230.10">
    <property type="match status" value="1"/>
</dbReference>
<dbReference type="Gene3D" id="3.30.70.890">
    <property type="entry name" value="GHMP kinase, C-terminal domain"/>
    <property type="match status" value="1"/>
</dbReference>
<dbReference type="HAMAP" id="MF_00061">
    <property type="entry name" value="IspE"/>
    <property type="match status" value="1"/>
</dbReference>
<dbReference type="InterPro" id="IPR013750">
    <property type="entry name" value="GHMP_kinase_C_dom"/>
</dbReference>
<dbReference type="InterPro" id="IPR036554">
    <property type="entry name" value="GHMP_kinase_C_sf"/>
</dbReference>
<dbReference type="InterPro" id="IPR006204">
    <property type="entry name" value="GHMP_kinase_N_dom"/>
</dbReference>
<dbReference type="InterPro" id="IPR004424">
    <property type="entry name" value="IspE"/>
</dbReference>
<dbReference type="InterPro" id="IPR020568">
    <property type="entry name" value="Ribosomal_Su5_D2-typ_SF"/>
</dbReference>
<dbReference type="InterPro" id="IPR014721">
    <property type="entry name" value="Ribsml_uS5_D2-typ_fold_subgr"/>
</dbReference>
<dbReference type="NCBIfam" id="TIGR00154">
    <property type="entry name" value="ispE"/>
    <property type="match status" value="1"/>
</dbReference>
<dbReference type="PANTHER" id="PTHR43527">
    <property type="entry name" value="4-DIPHOSPHOCYTIDYL-2-C-METHYL-D-ERYTHRITOL KINASE, CHLOROPLASTIC"/>
    <property type="match status" value="1"/>
</dbReference>
<dbReference type="PANTHER" id="PTHR43527:SF2">
    <property type="entry name" value="4-DIPHOSPHOCYTIDYL-2-C-METHYL-D-ERYTHRITOL KINASE, CHLOROPLASTIC"/>
    <property type="match status" value="1"/>
</dbReference>
<dbReference type="Pfam" id="PF08544">
    <property type="entry name" value="GHMP_kinases_C"/>
    <property type="match status" value="1"/>
</dbReference>
<dbReference type="Pfam" id="PF00288">
    <property type="entry name" value="GHMP_kinases_N"/>
    <property type="match status" value="1"/>
</dbReference>
<dbReference type="PIRSF" id="PIRSF010376">
    <property type="entry name" value="IspE"/>
    <property type="match status" value="1"/>
</dbReference>
<dbReference type="SUPFAM" id="SSF55060">
    <property type="entry name" value="GHMP Kinase, C-terminal domain"/>
    <property type="match status" value="1"/>
</dbReference>
<dbReference type="SUPFAM" id="SSF54211">
    <property type="entry name" value="Ribosomal protein S5 domain 2-like"/>
    <property type="match status" value="1"/>
</dbReference>
<accession>Q7VUH0</accession>
<keyword id="KW-0067">ATP-binding</keyword>
<keyword id="KW-0414">Isoprene biosynthesis</keyword>
<keyword id="KW-0418">Kinase</keyword>
<keyword id="KW-0547">Nucleotide-binding</keyword>
<keyword id="KW-1185">Reference proteome</keyword>
<keyword id="KW-0808">Transferase</keyword>
<evidence type="ECO:0000255" key="1">
    <source>
        <dbReference type="HAMAP-Rule" id="MF_00061"/>
    </source>
</evidence>
<reference key="1">
    <citation type="journal article" date="2003" name="Nat. Genet.">
        <title>Comparative analysis of the genome sequences of Bordetella pertussis, Bordetella parapertussis and Bordetella bronchiseptica.</title>
        <authorList>
            <person name="Parkhill J."/>
            <person name="Sebaihia M."/>
            <person name="Preston A."/>
            <person name="Murphy L.D."/>
            <person name="Thomson N.R."/>
            <person name="Harris D.E."/>
            <person name="Holden M.T.G."/>
            <person name="Churcher C.M."/>
            <person name="Bentley S.D."/>
            <person name="Mungall K.L."/>
            <person name="Cerdeno-Tarraga A.-M."/>
            <person name="Temple L."/>
            <person name="James K.D."/>
            <person name="Harris B."/>
            <person name="Quail M.A."/>
            <person name="Achtman M."/>
            <person name="Atkin R."/>
            <person name="Baker S."/>
            <person name="Basham D."/>
            <person name="Bason N."/>
            <person name="Cherevach I."/>
            <person name="Chillingworth T."/>
            <person name="Collins M."/>
            <person name="Cronin A."/>
            <person name="Davis P."/>
            <person name="Doggett J."/>
            <person name="Feltwell T."/>
            <person name="Goble A."/>
            <person name="Hamlin N."/>
            <person name="Hauser H."/>
            <person name="Holroyd S."/>
            <person name="Jagels K."/>
            <person name="Leather S."/>
            <person name="Moule S."/>
            <person name="Norberczak H."/>
            <person name="O'Neil S."/>
            <person name="Ormond D."/>
            <person name="Price C."/>
            <person name="Rabbinowitsch E."/>
            <person name="Rutter S."/>
            <person name="Sanders M."/>
            <person name="Saunders D."/>
            <person name="Seeger K."/>
            <person name="Sharp S."/>
            <person name="Simmonds M."/>
            <person name="Skelton J."/>
            <person name="Squares R."/>
            <person name="Squares S."/>
            <person name="Stevens K."/>
            <person name="Unwin L."/>
            <person name="Whitehead S."/>
            <person name="Barrell B.G."/>
            <person name="Maskell D.J."/>
        </authorList>
    </citation>
    <scope>NUCLEOTIDE SEQUENCE [LARGE SCALE GENOMIC DNA]</scope>
    <source>
        <strain>Tohama I / ATCC BAA-589 / NCTC 13251</strain>
    </source>
</reference>